<gene>
    <name evidence="1" type="primary">glyA</name>
    <name type="ordered locus">Mrad2831_3956</name>
</gene>
<name>GLYA_METRJ</name>
<accession>B1LZ88</accession>
<organism>
    <name type="scientific">Methylobacterium radiotolerans (strain ATCC 27329 / DSM 1819 / JCM 2831 / NBRC 15690 / NCIMB 10815 / 0-1)</name>
    <dbReference type="NCBI Taxonomy" id="426355"/>
    <lineage>
        <taxon>Bacteria</taxon>
        <taxon>Pseudomonadati</taxon>
        <taxon>Pseudomonadota</taxon>
        <taxon>Alphaproteobacteria</taxon>
        <taxon>Hyphomicrobiales</taxon>
        <taxon>Methylobacteriaceae</taxon>
        <taxon>Methylobacterium</taxon>
    </lineage>
</organism>
<sequence length="434" mass="46269">MSAGTAADKHFSNSFFAAPLTEADPEIAEAVAKELGRQQHEIELIASENIVSRAVLEAQGSVLTNKYAEGYPGRRYYGGCQFVDIAEDLAIERAKRLFDCGFANVQPNSGSQANQGVFLALMQPGDTFLGLDLAAGGHLTHGAPPNVSGKWFKPVSYTVRREDQRIDMEQVAQLAQEHKPKVIIAGGSGYPRHWDFAKFREIADSVGAYFMVDMAHFAGLVAAGVHPSPFPHAHVATTTTHKTLRGPRGGMILTNDEALAKKFNSAIFPGLQGGPLMHVIAGKAVAFGEALKPEFKIYARQVVENARALADTLISGGYDITSGGTDNHLMLVDLQRKGLTGKAAEAALSRAHITCNKNGVPFDTQKPTITSGIRLGTPAGTSRGFGVAEFKQIGGFIVEVLDGLAAKGEAGDSAVEADVKTRVHALTDRFPIYG</sequence>
<proteinExistence type="inferred from homology"/>
<dbReference type="EC" id="2.1.2.1" evidence="1"/>
<dbReference type="EMBL" id="CP001001">
    <property type="protein sequence ID" value="ACB25930.1"/>
    <property type="molecule type" value="Genomic_DNA"/>
</dbReference>
<dbReference type="RefSeq" id="WP_012320887.1">
    <property type="nucleotide sequence ID" value="NC_010505.1"/>
</dbReference>
<dbReference type="SMR" id="B1LZ88"/>
<dbReference type="STRING" id="426355.Mrad2831_3956"/>
<dbReference type="GeneID" id="6140011"/>
<dbReference type="KEGG" id="mrd:Mrad2831_3956"/>
<dbReference type="eggNOG" id="COG0112">
    <property type="taxonomic scope" value="Bacteria"/>
</dbReference>
<dbReference type="HOGENOM" id="CLU_022477_2_0_5"/>
<dbReference type="OrthoDB" id="9803846at2"/>
<dbReference type="UniPathway" id="UPA00193"/>
<dbReference type="UniPathway" id="UPA00288">
    <property type="reaction ID" value="UER01023"/>
</dbReference>
<dbReference type="Proteomes" id="UP000006589">
    <property type="component" value="Chromosome"/>
</dbReference>
<dbReference type="GO" id="GO:0005829">
    <property type="term" value="C:cytosol"/>
    <property type="evidence" value="ECO:0007669"/>
    <property type="project" value="TreeGrafter"/>
</dbReference>
<dbReference type="GO" id="GO:0004372">
    <property type="term" value="F:glycine hydroxymethyltransferase activity"/>
    <property type="evidence" value="ECO:0007669"/>
    <property type="project" value="UniProtKB-UniRule"/>
</dbReference>
<dbReference type="GO" id="GO:0030170">
    <property type="term" value="F:pyridoxal phosphate binding"/>
    <property type="evidence" value="ECO:0007669"/>
    <property type="project" value="UniProtKB-UniRule"/>
</dbReference>
<dbReference type="GO" id="GO:0019264">
    <property type="term" value="P:glycine biosynthetic process from serine"/>
    <property type="evidence" value="ECO:0007669"/>
    <property type="project" value="UniProtKB-UniRule"/>
</dbReference>
<dbReference type="GO" id="GO:0035999">
    <property type="term" value="P:tetrahydrofolate interconversion"/>
    <property type="evidence" value="ECO:0007669"/>
    <property type="project" value="UniProtKB-UniRule"/>
</dbReference>
<dbReference type="CDD" id="cd00378">
    <property type="entry name" value="SHMT"/>
    <property type="match status" value="1"/>
</dbReference>
<dbReference type="FunFam" id="3.40.640.10:FF:000001">
    <property type="entry name" value="Serine hydroxymethyltransferase"/>
    <property type="match status" value="1"/>
</dbReference>
<dbReference type="Gene3D" id="3.90.1150.10">
    <property type="entry name" value="Aspartate Aminotransferase, domain 1"/>
    <property type="match status" value="1"/>
</dbReference>
<dbReference type="Gene3D" id="3.40.640.10">
    <property type="entry name" value="Type I PLP-dependent aspartate aminotransferase-like (Major domain)"/>
    <property type="match status" value="1"/>
</dbReference>
<dbReference type="HAMAP" id="MF_00051">
    <property type="entry name" value="SHMT"/>
    <property type="match status" value="1"/>
</dbReference>
<dbReference type="InterPro" id="IPR015424">
    <property type="entry name" value="PyrdxlP-dep_Trfase"/>
</dbReference>
<dbReference type="InterPro" id="IPR015421">
    <property type="entry name" value="PyrdxlP-dep_Trfase_major"/>
</dbReference>
<dbReference type="InterPro" id="IPR015422">
    <property type="entry name" value="PyrdxlP-dep_Trfase_small"/>
</dbReference>
<dbReference type="InterPro" id="IPR001085">
    <property type="entry name" value="Ser_HO-MeTrfase"/>
</dbReference>
<dbReference type="InterPro" id="IPR049943">
    <property type="entry name" value="Ser_HO-MeTrfase-like"/>
</dbReference>
<dbReference type="InterPro" id="IPR019798">
    <property type="entry name" value="Ser_HO-MeTrfase_PLP_BS"/>
</dbReference>
<dbReference type="InterPro" id="IPR039429">
    <property type="entry name" value="SHMT-like_dom"/>
</dbReference>
<dbReference type="NCBIfam" id="NF000586">
    <property type="entry name" value="PRK00011.1"/>
    <property type="match status" value="1"/>
</dbReference>
<dbReference type="PANTHER" id="PTHR11680">
    <property type="entry name" value="SERINE HYDROXYMETHYLTRANSFERASE"/>
    <property type="match status" value="1"/>
</dbReference>
<dbReference type="PANTHER" id="PTHR11680:SF35">
    <property type="entry name" value="SERINE HYDROXYMETHYLTRANSFERASE 1"/>
    <property type="match status" value="1"/>
</dbReference>
<dbReference type="Pfam" id="PF00464">
    <property type="entry name" value="SHMT"/>
    <property type="match status" value="1"/>
</dbReference>
<dbReference type="PIRSF" id="PIRSF000412">
    <property type="entry name" value="SHMT"/>
    <property type="match status" value="1"/>
</dbReference>
<dbReference type="SUPFAM" id="SSF53383">
    <property type="entry name" value="PLP-dependent transferases"/>
    <property type="match status" value="1"/>
</dbReference>
<dbReference type="PROSITE" id="PS00096">
    <property type="entry name" value="SHMT"/>
    <property type="match status" value="1"/>
</dbReference>
<evidence type="ECO:0000255" key="1">
    <source>
        <dbReference type="HAMAP-Rule" id="MF_00051"/>
    </source>
</evidence>
<comment type="function">
    <text evidence="1">Catalyzes the reversible interconversion of serine and glycine with tetrahydrofolate (THF) serving as the one-carbon carrier. This reaction serves as the major source of one-carbon groups required for the biosynthesis of purines, thymidylate, methionine, and other important biomolecules. Also exhibits THF-independent aldolase activity toward beta-hydroxyamino acids, producing glycine and aldehydes, via a retro-aldol mechanism.</text>
</comment>
<comment type="catalytic activity">
    <reaction evidence="1">
        <text>(6R)-5,10-methylene-5,6,7,8-tetrahydrofolate + glycine + H2O = (6S)-5,6,7,8-tetrahydrofolate + L-serine</text>
        <dbReference type="Rhea" id="RHEA:15481"/>
        <dbReference type="ChEBI" id="CHEBI:15377"/>
        <dbReference type="ChEBI" id="CHEBI:15636"/>
        <dbReference type="ChEBI" id="CHEBI:33384"/>
        <dbReference type="ChEBI" id="CHEBI:57305"/>
        <dbReference type="ChEBI" id="CHEBI:57453"/>
        <dbReference type="EC" id="2.1.2.1"/>
    </reaction>
</comment>
<comment type="cofactor">
    <cofactor evidence="1">
        <name>pyridoxal 5'-phosphate</name>
        <dbReference type="ChEBI" id="CHEBI:597326"/>
    </cofactor>
</comment>
<comment type="pathway">
    <text evidence="1">One-carbon metabolism; tetrahydrofolate interconversion.</text>
</comment>
<comment type="pathway">
    <text evidence="1">Amino-acid biosynthesis; glycine biosynthesis; glycine from L-serine: step 1/1.</text>
</comment>
<comment type="subunit">
    <text evidence="1">Homodimer.</text>
</comment>
<comment type="subcellular location">
    <subcellularLocation>
        <location evidence="1">Cytoplasm</location>
    </subcellularLocation>
</comment>
<comment type="similarity">
    <text evidence="1">Belongs to the SHMT family.</text>
</comment>
<feature type="chain" id="PRO_1000091559" description="Serine hydroxymethyltransferase">
    <location>
        <begin position="1"/>
        <end position="434"/>
    </location>
</feature>
<feature type="binding site" evidence="1">
    <location>
        <position position="133"/>
    </location>
    <ligand>
        <name>(6S)-5,6,7,8-tetrahydrofolate</name>
        <dbReference type="ChEBI" id="CHEBI:57453"/>
    </ligand>
</feature>
<feature type="binding site" evidence="1">
    <location>
        <begin position="137"/>
        <end position="139"/>
    </location>
    <ligand>
        <name>(6S)-5,6,7,8-tetrahydrofolate</name>
        <dbReference type="ChEBI" id="CHEBI:57453"/>
    </ligand>
</feature>
<feature type="site" description="Plays an important role in substrate specificity" evidence="1">
    <location>
        <position position="241"/>
    </location>
</feature>
<feature type="modified residue" description="N6-(pyridoxal phosphate)lysine" evidence="1">
    <location>
        <position position="242"/>
    </location>
</feature>
<reference key="1">
    <citation type="submission" date="2008-03" db="EMBL/GenBank/DDBJ databases">
        <title>Complete sequence of chromosome of Methylobacterium radiotolerans JCM 2831.</title>
        <authorList>
            <consortium name="US DOE Joint Genome Institute"/>
            <person name="Copeland A."/>
            <person name="Lucas S."/>
            <person name="Lapidus A."/>
            <person name="Glavina del Rio T."/>
            <person name="Dalin E."/>
            <person name="Tice H."/>
            <person name="Bruce D."/>
            <person name="Goodwin L."/>
            <person name="Pitluck S."/>
            <person name="Kiss H."/>
            <person name="Brettin T."/>
            <person name="Detter J.C."/>
            <person name="Han C."/>
            <person name="Kuske C.R."/>
            <person name="Schmutz J."/>
            <person name="Larimer F."/>
            <person name="Land M."/>
            <person name="Hauser L."/>
            <person name="Kyrpides N."/>
            <person name="Mikhailova N."/>
            <person name="Marx C.J."/>
            <person name="Richardson P."/>
        </authorList>
    </citation>
    <scope>NUCLEOTIDE SEQUENCE [LARGE SCALE GENOMIC DNA]</scope>
    <source>
        <strain>ATCC 27329 / DSM 1819 / JCM 2831 / NBRC 15690 / NCIMB 10815 / 0-1</strain>
    </source>
</reference>
<keyword id="KW-0028">Amino-acid biosynthesis</keyword>
<keyword id="KW-0963">Cytoplasm</keyword>
<keyword id="KW-0554">One-carbon metabolism</keyword>
<keyword id="KW-0663">Pyridoxal phosphate</keyword>
<keyword id="KW-0808">Transferase</keyword>
<protein>
    <recommendedName>
        <fullName evidence="1">Serine hydroxymethyltransferase</fullName>
        <shortName evidence="1">SHMT</shortName>
        <shortName evidence="1">Serine methylase</shortName>
        <ecNumber evidence="1">2.1.2.1</ecNumber>
    </recommendedName>
</protein>